<evidence type="ECO:0000255" key="1">
    <source>
        <dbReference type="HAMAP-Rule" id="MF_00268"/>
    </source>
</evidence>
<evidence type="ECO:0000256" key="2">
    <source>
        <dbReference type="SAM" id="MobiDB-lite"/>
    </source>
</evidence>
<proteinExistence type="inferred from homology"/>
<dbReference type="EMBL" id="L25893">
    <property type="protein sequence ID" value="AAA50463.1"/>
    <property type="molecule type" value="Genomic_DNA"/>
</dbReference>
<dbReference type="EMBL" id="AF317802">
    <property type="protein sequence ID" value="AAK15276.1"/>
    <property type="molecule type" value="Genomic_DNA"/>
</dbReference>
<dbReference type="EMBL" id="M94061">
    <property type="protein sequence ID" value="AAA26667.1"/>
    <property type="molecule type" value="Genomic_DNA"/>
</dbReference>
<dbReference type="PIR" id="F42721">
    <property type="entry name" value="F42721"/>
</dbReference>
<dbReference type="RefSeq" id="WP_000368166.1">
    <property type="nucleotide sequence ID" value="NZ_WYDB01000002.1"/>
</dbReference>
<dbReference type="SMR" id="P68845"/>
<dbReference type="OMA" id="DSKMGLH"/>
<dbReference type="GO" id="GO:0005829">
    <property type="term" value="C:cytosol"/>
    <property type="evidence" value="ECO:0007669"/>
    <property type="project" value="TreeGrafter"/>
</dbReference>
<dbReference type="GO" id="GO:0005524">
    <property type="term" value="F:ATP binding"/>
    <property type="evidence" value="ECO:0007669"/>
    <property type="project" value="UniProtKB-UniRule"/>
</dbReference>
<dbReference type="GO" id="GO:0016887">
    <property type="term" value="F:ATP hydrolysis activity"/>
    <property type="evidence" value="ECO:0007669"/>
    <property type="project" value="InterPro"/>
</dbReference>
<dbReference type="GO" id="GO:0140664">
    <property type="term" value="F:ATP-dependent DNA damage sensor activity"/>
    <property type="evidence" value="ECO:0007669"/>
    <property type="project" value="InterPro"/>
</dbReference>
<dbReference type="GO" id="GO:0003684">
    <property type="term" value="F:damaged DNA binding"/>
    <property type="evidence" value="ECO:0007669"/>
    <property type="project" value="UniProtKB-UniRule"/>
</dbReference>
<dbReference type="GO" id="GO:0003697">
    <property type="term" value="F:single-stranded DNA binding"/>
    <property type="evidence" value="ECO:0007669"/>
    <property type="project" value="UniProtKB-UniRule"/>
</dbReference>
<dbReference type="GO" id="GO:0006310">
    <property type="term" value="P:DNA recombination"/>
    <property type="evidence" value="ECO:0007669"/>
    <property type="project" value="UniProtKB-UniRule"/>
</dbReference>
<dbReference type="GO" id="GO:0006281">
    <property type="term" value="P:DNA repair"/>
    <property type="evidence" value="ECO:0007669"/>
    <property type="project" value="UniProtKB-UniRule"/>
</dbReference>
<dbReference type="GO" id="GO:0009432">
    <property type="term" value="P:SOS response"/>
    <property type="evidence" value="ECO:0007669"/>
    <property type="project" value="UniProtKB-UniRule"/>
</dbReference>
<dbReference type="CDD" id="cd00983">
    <property type="entry name" value="RecA"/>
    <property type="match status" value="1"/>
</dbReference>
<dbReference type="FunFam" id="3.40.50.300:FF:000087">
    <property type="entry name" value="Recombinase RecA"/>
    <property type="match status" value="1"/>
</dbReference>
<dbReference type="Gene3D" id="3.40.50.300">
    <property type="entry name" value="P-loop containing nucleotide triphosphate hydrolases"/>
    <property type="match status" value="1"/>
</dbReference>
<dbReference type="HAMAP" id="MF_00268">
    <property type="entry name" value="RecA"/>
    <property type="match status" value="1"/>
</dbReference>
<dbReference type="InterPro" id="IPR003593">
    <property type="entry name" value="AAA+_ATPase"/>
</dbReference>
<dbReference type="InterPro" id="IPR013765">
    <property type="entry name" value="DNA_recomb/repair_RecA"/>
</dbReference>
<dbReference type="InterPro" id="IPR020584">
    <property type="entry name" value="DNA_recomb/repair_RecA_CS"/>
</dbReference>
<dbReference type="InterPro" id="IPR027417">
    <property type="entry name" value="P-loop_NTPase"/>
</dbReference>
<dbReference type="InterPro" id="IPR049261">
    <property type="entry name" value="RecA-like_C"/>
</dbReference>
<dbReference type="InterPro" id="IPR049428">
    <property type="entry name" value="RecA-like_N"/>
</dbReference>
<dbReference type="InterPro" id="IPR020588">
    <property type="entry name" value="RecA_ATP-bd"/>
</dbReference>
<dbReference type="InterPro" id="IPR023400">
    <property type="entry name" value="RecA_C_sf"/>
</dbReference>
<dbReference type="InterPro" id="IPR020587">
    <property type="entry name" value="RecA_monomer-monomer_interface"/>
</dbReference>
<dbReference type="NCBIfam" id="TIGR02012">
    <property type="entry name" value="tigrfam_recA"/>
    <property type="match status" value="1"/>
</dbReference>
<dbReference type="PANTHER" id="PTHR45900:SF1">
    <property type="entry name" value="MITOCHONDRIAL DNA REPAIR PROTEIN RECA HOMOLOG-RELATED"/>
    <property type="match status" value="1"/>
</dbReference>
<dbReference type="PANTHER" id="PTHR45900">
    <property type="entry name" value="RECA"/>
    <property type="match status" value="1"/>
</dbReference>
<dbReference type="Pfam" id="PF00154">
    <property type="entry name" value="RecA"/>
    <property type="match status" value="1"/>
</dbReference>
<dbReference type="Pfam" id="PF21096">
    <property type="entry name" value="RecA_C"/>
    <property type="match status" value="1"/>
</dbReference>
<dbReference type="PRINTS" id="PR00142">
    <property type="entry name" value="RECA"/>
</dbReference>
<dbReference type="SMART" id="SM00382">
    <property type="entry name" value="AAA"/>
    <property type="match status" value="1"/>
</dbReference>
<dbReference type="SUPFAM" id="SSF52540">
    <property type="entry name" value="P-loop containing nucleoside triphosphate hydrolases"/>
    <property type="match status" value="1"/>
</dbReference>
<dbReference type="SUPFAM" id="SSF54752">
    <property type="entry name" value="RecA protein, C-terminal domain"/>
    <property type="match status" value="1"/>
</dbReference>
<dbReference type="PROSITE" id="PS00321">
    <property type="entry name" value="RECA_1"/>
    <property type="match status" value="1"/>
</dbReference>
<dbReference type="PROSITE" id="PS50162">
    <property type="entry name" value="RECA_2"/>
    <property type="match status" value="1"/>
</dbReference>
<dbReference type="PROSITE" id="PS50163">
    <property type="entry name" value="RECA_3"/>
    <property type="match status" value="1"/>
</dbReference>
<protein>
    <recommendedName>
        <fullName evidence="1">Protein RecA</fullName>
    </recommendedName>
    <alternativeName>
        <fullName evidence="1">Recombinase A</fullName>
    </alternativeName>
</protein>
<reference key="1">
    <citation type="journal article" date="1994" name="Gene">
        <title>A genetic and molecular characterization of the recA gene from Staphylococcus aureus.</title>
        <authorList>
            <person name="Bayles K.W."/>
            <person name="Brunskill E.W."/>
            <person name="Iandolo J.J."/>
            <person name="Hruska L.L."/>
            <person name="Huang S."/>
            <person name="Pattee P.A."/>
            <person name="Smiley B.K."/>
            <person name="Yasbin R.E."/>
        </authorList>
    </citation>
    <scope>NUCLEOTIDE SEQUENCE [GENOMIC DNA]</scope>
</reference>
<reference key="2">
    <citation type="submission" date="2000-11" db="EMBL/GenBank/DDBJ databases">
        <title>Insertional inactivation of recA, but not agr or sar, abolishes increased adhesion to fibronectin evoked by sub-inhibitory levels of ciprofloxacin in quinolone resistant Staphylococcus aureus.</title>
        <authorList>
            <person name="Bisognano C."/>
            <person name="Kelley W.L."/>
            <person name="Francois P."/>
            <person name="Lew D.P."/>
            <person name="Hooper D.C."/>
            <person name="Vaudaux P."/>
        </authorList>
    </citation>
    <scope>NUCLEOTIDE SEQUENCE [GENOMIC DNA]</scope>
</reference>
<reference key="3">
    <citation type="journal article" date="1992" name="J. Bacteriol.">
        <title>A general method for cloning recA genes of Gram-positive bacteria by polymerase chain reaction.</title>
        <authorList>
            <person name="Duwat P."/>
            <person name="Ehrlich S.D."/>
            <person name="Gruss A."/>
        </authorList>
    </citation>
    <scope>NUCLEOTIDE SEQUENCE [GENOMIC DNA] OF 101-204</scope>
    <source>
        <strain>ILRN450</strain>
    </source>
</reference>
<feature type="chain" id="PRO_0000122843" description="Protein RecA">
    <location>
        <begin position="1"/>
        <end position="347"/>
    </location>
</feature>
<feature type="region of interest" description="Disordered" evidence="2">
    <location>
        <begin position="325"/>
        <end position="347"/>
    </location>
</feature>
<feature type="compositionally biased region" description="Basic and acidic residues" evidence="2">
    <location>
        <begin position="338"/>
        <end position="347"/>
    </location>
</feature>
<feature type="binding site" evidence="1">
    <location>
        <begin position="65"/>
        <end position="72"/>
    </location>
    <ligand>
        <name>ATP</name>
        <dbReference type="ChEBI" id="CHEBI:30616"/>
    </ligand>
</feature>
<comment type="function">
    <text>Can catalyze the hydrolysis of ATP in the presence of single-stranded DNA, the ATP-dependent uptake of single-stranded DNA by duplex DNA, and the ATP-dependent hybridization of homologous single-stranded DNAs. It interacts with LexA causing its activation and leading to its autocatalytic cleavage.</text>
</comment>
<comment type="subcellular location">
    <subcellularLocation>
        <location evidence="1">Cytoplasm</location>
    </subcellularLocation>
</comment>
<comment type="similarity">
    <text evidence="1">Belongs to the RecA family.</text>
</comment>
<organism>
    <name type="scientific">Staphylococcus aureus</name>
    <dbReference type="NCBI Taxonomy" id="1280"/>
    <lineage>
        <taxon>Bacteria</taxon>
        <taxon>Bacillati</taxon>
        <taxon>Bacillota</taxon>
        <taxon>Bacilli</taxon>
        <taxon>Bacillales</taxon>
        <taxon>Staphylococcaceae</taxon>
        <taxon>Staphylococcus</taxon>
    </lineage>
</organism>
<keyword id="KW-0067">ATP-binding</keyword>
<keyword id="KW-0963">Cytoplasm</keyword>
<keyword id="KW-0227">DNA damage</keyword>
<keyword id="KW-0233">DNA recombination</keyword>
<keyword id="KW-0234">DNA repair</keyword>
<keyword id="KW-0238">DNA-binding</keyword>
<keyword id="KW-0547">Nucleotide-binding</keyword>
<keyword id="KW-0742">SOS response</keyword>
<gene>
    <name evidence="1" type="primary">recA</name>
</gene>
<sequence length="347" mass="37657">MDNDRQKALDTVIKNMEKSFGKGAVMKLGDNIGRRVSTTSTGSVTLDNALGVGGYPKGRIIEIYGPESSGKTTVALHAIAEVQSNGGVAAFIDAEHALDPEYAQALGVDIDNLYLSQPDHGEQGLEIAEAFVRSGAVDIVVVDSVAALTPKAEIEGEMGDTHVGLQARLMSQALRKLSGAISKSNTTAIFINQIREKVGVMFGNPETTPGGRALKFYSSVRLEVRRAEQLKQGQEIVGNRTKIKVVKNKVAPPFRVAEVDIMYGQGISKEGELIDLGVENDIVDKSGAWYSYNGERMGQGKENVKMYLKENPQIKEEIDRKLREKLGISDGDVEETEDAPKSLFDEE</sequence>
<accession>P68845</accession>
<accession>Q02350</accession>
<name>RECA_STAAU</name>